<keyword id="KW-0998">Cell outer membrane</keyword>
<keyword id="KW-0406">Ion transport</keyword>
<keyword id="KW-0472">Membrane</keyword>
<keyword id="KW-0626">Porin</keyword>
<keyword id="KW-0732">Signal</keyword>
<keyword id="KW-0762">Sugar transport</keyword>
<keyword id="KW-0812">Transmembrane</keyword>
<keyword id="KW-1134">Transmembrane beta strand</keyword>
<keyword id="KW-0813">Transport</keyword>
<protein>
    <recommendedName>
        <fullName evidence="1">Maltoporin 2</fullName>
    </recommendedName>
    <alternativeName>
        <fullName evidence="1">Maltose-inducible porin 2</fullName>
    </alternativeName>
</protein>
<comment type="function">
    <text evidence="1">Involved in the transport of maltose and maltodextrins.</text>
</comment>
<comment type="catalytic activity">
    <reaction evidence="1">
        <text>beta-maltose(in) = beta-maltose(out)</text>
        <dbReference type="Rhea" id="RHEA:29731"/>
        <dbReference type="ChEBI" id="CHEBI:18147"/>
    </reaction>
</comment>
<comment type="subunit">
    <text evidence="1">Homotrimer formed of three 18-stranded antiparallel beta-barrels, containing three independent channels.</text>
</comment>
<comment type="subcellular location">
    <subcellularLocation>
        <location evidence="1">Cell outer membrane</location>
        <topology evidence="1">Multi-pass membrane protein</topology>
    </subcellularLocation>
</comment>
<comment type="induction">
    <text evidence="1">By maltose.</text>
</comment>
<comment type="similarity">
    <text evidence="1">Belongs to the porin LamB (TC 1.B.3) family.</text>
</comment>
<gene>
    <name evidence="1" type="primary">lamB2</name>
    <name type="ordered locus">YPTB3095</name>
</gene>
<sequence>MKTSLRTLSVALAAALVSPSVLAIEKIDFHGYMRAGVGVSSDGGLAEWQKTMVGRLGNESDTYGEIGLGAEVYKKEDVSFYLESMVSMLSDGSNDSETTIGDDAQFGLRQLNLQIKGLIPGDKEAVIWGGKRYYQRHDLHIIDTKYWNISGSGAGIENYTVGPGAVSVAWVRGDANDVDTRITGDSDVNINYIDVRYAGFKPWAGSWTEVGIDYAMPNPTKQQKEYGGLYDADNAVMLTGEISQDMFGGYNKLVLQYANKGLAQNMISQGGGWYDMWHKTDEAKGYRVINTGLIPITDKFSFNHVLTWGSANDITEYTDKTNLISLVGRAQYQFTQYVRAIGEVGGFYQKDTYHNGSNYKQGGEKYTIALGLAEGPDFLSRPELRVFASYLNDSENGKPFEDGTSNDTWNFGVQVEAWW</sequence>
<organism>
    <name type="scientific">Yersinia pseudotuberculosis serotype I (strain IP32953)</name>
    <dbReference type="NCBI Taxonomy" id="273123"/>
    <lineage>
        <taxon>Bacteria</taxon>
        <taxon>Pseudomonadati</taxon>
        <taxon>Pseudomonadota</taxon>
        <taxon>Gammaproteobacteria</taxon>
        <taxon>Enterobacterales</taxon>
        <taxon>Yersiniaceae</taxon>
        <taxon>Yersinia</taxon>
    </lineage>
</organism>
<feature type="signal peptide" evidence="1">
    <location>
        <begin position="1"/>
        <end position="23"/>
    </location>
</feature>
<feature type="chain" id="PRO_0000228859" description="Maltoporin 2">
    <location>
        <begin position="24"/>
        <end position="419"/>
    </location>
</feature>
<feature type="site" description="Greasy slide, important in sugar transport" evidence="1">
    <location>
        <position position="32"/>
    </location>
</feature>
<feature type="site" description="Greasy slide, important in sugar transport" evidence="1">
    <location>
        <position position="63"/>
    </location>
</feature>
<feature type="site" description="Greasy slide, important in sugar transport" evidence="1">
    <location>
        <position position="250"/>
    </location>
</feature>
<feature type="site" description="Greasy slide, important in sugar transport" evidence="1">
    <location>
        <position position="418"/>
    </location>
</feature>
<name>LAMB2_YERPS</name>
<accession>Q666Z8</accession>
<reference key="1">
    <citation type="journal article" date="2004" name="Proc. Natl. Acad. Sci. U.S.A.">
        <title>Insights into the evolution of Yersinia pestis through whole-genome comparison with Yersinia pseudotuberculosis.</title>
        <authorList>
            <person name="Chain P.S.G."/>
            <person name="Carniel E."/>
            <person name="Larimer F.W."/>
            <person name="Lamerdin J."/>
            <person name="Stoutland P.O."/>
            <person name="Regala W.M."/>
            <person name="Georgescu A.M."/>
            <person name="Vergez L.M."/>
            <person name="Land M.L."/>
            <person name="Motin V.L."/>
            <person name="Brubaker R.R."/>
            <person name="Fowler J."/>
            <person name="Hinnebusch J."/>
            <person name="Marceau M."/>
            <person name="Medigue C."/>
            <person name="Simonet M."/>
            <person name="Chenal-Francisque V."/>
            <person name="Souza B."/>
            <person name="Dacheux D."/>
            <person name="Elliott J.M."/>
            <person name="Derbise A."/>
            <person name="Hauser L.J."/>
            <person name="Garcia E."/>
        </authorList>
    </citation>
    <scope>NUCLEOTIDE SEQUENCE [LARGE SCALE GENOMIC DNA]</scope>
    <source>
        <strain>IP32953</strain>
    </source>
</reference>
<dbReference type="EMBL" id="BX936398">
    <property type="protein sequence ID" value="CAH22333.1"/>
    <property type="molecule type" value="Genomic_DNA"/>
</dbReference>
<dbReference type="RefSeq" id="WP_011192907.1">
    <property type="nucleotide sequence ID" value="NC_006155.1"/>
</dbReference>
<dbReference type="SMR" id="Q666Z8"/>
<dbReference type="GeneID" id="49784886"/>
<dbReference type="KEGG" id="ypo:BZ17_3523"/>
<dbReference type="KEGG" id="yps:YPTB3095"/>
<dbReference type="PATRIC" id="fig|273123.14.peg.3701"/>
<dbReference type="Proteomes" id="UP000001011">
    <property type="component" value="Chromosome"/>
</dbReference>
<dbReference type="GO" id="GO:0009279">
    <property type="term" value="C:cell outer membrane"/>
    <property type="evidence" value="ECO:0007669"/>
    <property type="project" value="UniProtKB-SubCell"/>
</dbReference>
<dbReference type="GO" id="GO:0046930">
    <property type="term" value="C:pore complex"/>
    <property type="evidence" value="ECO:0007669"/>
    <property type="project" value="UniProtKB-KW"/>
</dbReference>
<dbReference type="GO" id="GO:0042958">
    <property type="term" value="F:maltodextrin transmembrane transporter activity"/>
    <property type="evidence" value="ECO:0007669"/>
    <property type="project" value="InterPro"/>
</dbReference>
<dbReference type="GO" id="GO:0015481">
    <property type="term" value="F:maltose transporting porin activity"/>
    <property type="evidence" value="ECO:0007669"/>
    <property type="project" value="InterPro"/>
</dbReference>
<dbReference type="GO" id="GO:0006811">
    <property type="term" value="P:monoatomic ion transport"/>
    <property type="evidence" value="ECO:0007669"/>
    <property type="project" value="UniProtKB-KW"/>
</dbReference>
<dbReference type="CDD" id="cd01346">
    <property type="entry name" value="Maltoporin-like"/>
    <property type="match status" value="1"/>
</dbReference>
<dbReference type="Gene3D" id="2.40.170.10">
    <property type="entry name" value="Porin, LamB type"/>
    <property type="match status" value="1"/>
</dbReference>
<dbReference type="HAMAP" id="MF_01301">
    <property type="entry name" value="LamB"/>
    <property type="match status" value="1"/>
</dbReference>
<dbReference type="InterPro" id="IPR050286">
    <property type="entry name" value="G_neg_Bact_CarbUptk_Porin"/>
</dbReference>
<dbReference type="InterPro" id="IPR023738">
    <property type="entry name" value="Maltoporin"/>
</dbReference>
<dbReference type="InterPro" id="IPR003192">
    <property type="entry name" value="Porin_LamB"/>
</dbReference>
<dbReference type="InterPro" id="IPR036998">
    <property type="entry name" value="Porin_LamB_sf"/>
</dbReference>
<dbReference type="NCBIfam" id="NF006860">
    <property type="entry name" value="PRK09360.1"/>
    <property type="match status" value="1"/>
</dbReference>
<dbReference type="NCBIfam" id="NF009061">
    <property type="entry name" value="PRK12395.1"/>
    <property type="match status" value="1"/>
</dbReference>
<dbReference type="PANTHER" id="PTHR38762">
    <property type="entry name" value="CRYPTIC OUTER MEMBRANE PORIN BGLH-RELATED"/>
    <property type="match status" value="1"/>
</dbReference>
<dbReference type="PANTHER" id="PTHR38762:SF1">
    <property type="entry name" value="CRYPTIC OUTER MEMBRANE PORIN BGLH-RELATED"/>
    <property type="match status" value="1"/>
</dbReference>
<dbReference type="Pfam" id="PF02264">
    <property type="entry name" value="LamB"/>
    <property type="match status" value="1"/>
</dbReference>
<dbReference type="SUPFAM" id="SSF56935">
    <property type="entry name" value="Porins"/>
    <property type="match status" value="1"/>
</dbReference>
<evidence type="ECO:0000255" key="1">
    <source>
        <dbReference type="HAMAP-Rule" id="MF_01301"/>
    </source>
</evidence>
<proteinExistence type="inferred from homology"/>